<name>PROB_MYCLE</name>
<comment type="function">
    <text evidence="1">Catalyzes the transfer of a phosphate group to glutamate to form L-glutamate 5-phosphate.</text>
</comment>
<comment type="catalytic activity">
    <reaction evidence="1">
        <text>L-glutamate + ATP = L-glutamyl 5-phosphate + ADP</text>
        <dbReference type="Rhea" id="RHEA:14877"/>
        <dbReference type="ChEBI" id="CHEBI:29985"/>
        <dbReference type="ChEBI" id="CHEBI:30616"/>
        <dbReference type="ChEBI" id="CHEBI:58274"/>
        <dbReference type="ChEBI" id="CHEBI:456216"/>
        <dbReference type="EC" id="2.7.2.11"/>
    </reaction>
</comment>
<comment type="pathway">
    <text evidence="1">Amino-acid biosynthesis; L-proline biosynthesis; L-glutamate 5-semialdehyde from L-glutamate: step 1/2.</text>
</comment>
<comment type="subcellular location">
    <subcellularLocation>
        <location evidence="1">Cytoplasm</location>
    </subcellularLocation>
</comment>
<comment type="similarity">
    <text evidence="1">Belongs to the glutamate 5-kinase family.</text>
</comment>
<keyword id="KW-0028">Amino-acid biosynthesis</keyword>
<keyword id="KW-0067">ATP-binding</keyword>
<keyword id="KW-0963">Cytoplasm</keyword>
<keyword id="KW-0418">Kinase</keyword>
<keyword id="KW-0547">Nucleotide-binding</keyword>
<keyword id="KW-0641">Proline biosynthesis</keyword>
<keyword id="KW-1185">Reference proteome</keyword>
<keyword id="KW-0808">Transferase</keyword>
<dbReference type="EC" id="2.7.2.11" evidence="1"/>
<dbReference type="EMBL" id="AL583922">
    <property type="protein sequence ID" value="CAC30414.1"/>
    <property type="molecule type" value="Genomic_DNA"/>
</dbReference>
<dbReference type="PIR" id="A87092">
    <property type="entry name" value="A87092"/>
</dbReference>
<dbReference type="RefSeq" id="NP_302029.1">
    <property type="nucleotide sequence ID" value="NC_002677.1"/>
</dbReference>
<dbReference type="RefSeq" id="WP_010908350.1">
    <property type="nucleotide sequence ID" value="NC_002677.1"/>
</dbReference>
<dbReference type="SMR" id="Q9CBZ5"/>
<dbReference type="STRING" id="272631.gene:17575302"/>
<dbReference type="KEGG" id="mle:ML1464"/>
<dbReference type="PATRIC" id="fig|272631.5.peg.2740"/>
<dbReference type="Leproma" id="ML1464"/>
<dbReference type="eggNOG" id="COG0263">
    <property type="taxonomic scope" value="Bacteria"/>
</dbReference>
<dbReference type="HOGENOM" id="CLU_025400_2_0_11"/>
<dbReference type="OrthoDB" id="9804434at2"/>
<dbReference type="UniPathway" id="UPA00098">
    <property type="reaction ID" value="UER00359"/>
</dbReference>
<dbReference type="Proteomes" id="UP000000806">
    <property type="component" value="Chromosome"/>
</dbReference>
<dbReference type="GO" id="GO:0005829">
    <property type="term" value="C:cytosol"/>
    <property type="evidence" value="ECO:0007669"/>
    <property type="project" value="TreeGrafter"/>
</dbReference>
<dbReference type="GO" id="GO:0005524">
    <property type="term" value="F:ATP binding"/>
    <property type="evidence" value="ECO:0007669"/>
    <property type="project" value="UniProtKB-KW"/>
</dbReference>
<dbReference type="GO" id="GO:0004349">
    <property type="term" value="F:glutamate 5-kinase activity"/>
    <property type="evidence" value="ECO:0007669"/>
    <property type="project" value="UniProtKB-UniRule"/>
</dbReference>
<dbReference type="GO" id="GO:0003723">
    <property type="term" value="F:RNA binding"/>
    <property type="evidence" value="ECO:0007669"/>
    <property type="project" value="InterPro"/>
</dbReference>
<dbReference type="GO" id="GO:0055129">
    <property type="term" value="P:L-proline biosynthetic process"/>
    <property type="evidence" value="ECO:0007669"/>
    <property type="project" value="UniProtKB-UniRule"/>
</dbReference>
<dbReference type="CDD" id="cd04242">
    <property type="entry name" value="AAK_G5K_ProB"/>
    <property type="match status" value="1"/>
</dbReference>
<dbReference type="CDD" id="cd21157">
    <property type="entry name" value="PUA_G5K"/>
    <property type="match status" value="1"/>
</dbReference>
<dbReference type="FunFam" id="3.40.1160.10:FF:000018">
    <property type="entry name" value="Glutamate 5-kinase"/>
    <property type="match status" value="1"/>
</dbReference>
<dbReference type="Gene3D" id="3.40.1160.10">
    <property type="entry name" value="Acetylglutamate kinase-like"/>
    <property type="match status" value="1"/>
</dbReference>
<dbReference type="Gene3D" id="2.30.130.10">
    <property type="entry name" value="PUA domain"/>
    <property type="match status" value="1"/>
</dbReference>
<dbReference type="HAMAP" id="MF_00456">
    <property type="entry name" value="ProB"/>
    <property type="match status" value="1"/>
</dbReference>
<dbReference type="InterPro" id="IPR036393">
    <property type="entry name" value="AceGlu_kinase-like_sf"/>
</dbReference>
<dbReference type="InterPro" id="IPR001048">
    <property type="entry name" value="Asp/Glu/Uridylate_kinase"/>
</dbReference>
<dbReference type="InterPro" id="IPR041739">
    <property type="entry name" value="G5K_ProB"/>
</dbReference>
<dbReference type="InterPro" id="IPR001057">
    <property type="entry name" value="Glu/AcGlu_kinase"/>
</dbReference>
<dbReference type="InterPro" id="IPR011529">
    <property type="entry name" value="Glu_5kinase"/>
</dbReference>
<dbReference type="InterPro" id="IPR005715">
    <property type="entry name" value="Glu_5kinase/COase_Synthase"/>
</dbReference>
<dbReference type="InterPro" id="IPR019797">
    <property type="entry name" value="Glutamate_5-kinase_CS"/>
</dbReference>
<dbReference type="InterPro" id="IPR002478">
    <property type="entry name" value="PUA"/>
</dbReference>
<dbReference type="InterPro" id="IPR015947">
    <property type="entry name" value="PUA-like_sf"/>
</dbReference>
<dbReference type="InterPro" id="IPR036974">
    <property type="entry name" value="PUA_sf"/>
</dbReference>
<dbReference type="NCBIfam" id="TIGR01027">
    <property type="entry name" value="proB"/>
    <property type="match status" value="1"/>
</dbReference>
<dbReference type="PANTHER" id="PTHR43654">
    <property type="entry name" value="GLUTAMATE 5-KINASE"/>
    <property type="match status" value="1"/>
</dbReference>
<dbReference type="PANTHER" id="PTHR43654:SF1">
    <property type="entry name" value="ISOPENTENYL PHOSPHATE KINASE"/>
    <property type="match status" value="1"/>
</dbReference>
<dbReference type="Pfam" id="PF00696">
    <property type="entry name" value="AA_kinase"/>
    <property type="match status" value="1"/>
</dbReference>
<dbReference type="Pfam" id="PF01472">
    <property type="entry name" value="PUA"/>
    <property type="match status" value="1"/>
</dbReference>
<dbReference type="PIRSF" id="PIRSF000729">
    <property type="entry name" value="GK"/>
    <property type="match status" value="1"/>
</dbReference>
<dbReference type="PRINTS" id="PR00474">
    <property type="entry name" value="GLU5KINASE"/>
</dbReference>
<dbReference type="SMART" id="SM00359">
    <property type="entry name" value="PUA"/>
    <property type="match status" value="1"/>
</dbReference>
<dbReference type="SUPFAM" id="SSF53633">
    <property type="entry name" value="Carbamate kinase-like"/>
    <property type="match status" value="1"/>
</dbReference>
<dbReference type="SUPFAM" id="SSF88697">
    <property type="entry name" value="PUA domain-like"/>
    <property type="match status" value="1"/>
</dbReference>
<dbReference type="PROSITE" id="PS00902">
    <property type="entry name" value="GLUTAMATE_5_KINASE"/>
    <property type="match status" value="1"/>
</dbReference>
<dbReference type="PROSITE" id="PS50890">
    <property type="entry name" value="PUA"/>
    <property type="match status" value="1"/>
</dbReference>
<sequence length="367" mass="38135">MSVHRDAIRAARSLVVKVGTNALTTSSGVFDSSRLARLVDAIEARMKAGTDVVIVSSGAIAAGIEPLGLSLRPKDLATKQAAASVGQVALVNSWSAAFARYGRAVGQVLLTAQDISMRVQHTNAQRTLDRLRALHAVAIVNENDTVATNEIRFGDNDRLSAVVAHLVGAEALVLLSDINGLYDSDPRKNTGARFVPEVTGSADLDGVVASRGSSLGTGGMVSKMSSALLAADAGVPVLLAAAADAATALTDASVGTVFAARPDRMSARRFWLRYAADSVGSLTLDEGAVWAVVQQRRSLLAAGITAVSGRFYGGDVVELRGPDATMVARGVVAYDATELAAMMGRSTSELPCELRRPAVHADDLVSI</sequence>
<reference key="1">
    <citation type="journal article" date="2001" name="Nature">
        <title>Massive gene decay in the leprosy bacillus.</title>
        <authorList>
            <person name="Cole S.T."/>
            <person name="Eiglmeier K."/>
            <person name="Parkhill J."/>
            <person name="James K.D."/>
            <person name="Thomson N.R."/>
            <person name="Wheeler P.R."/>
            <person name="Honore N."/>
            <person name="Garnier T."/>
            <person name="Churcher C.M."/>
            <person name="Harris D.E."/>
            <person name="Mungall K.L."/>
            <person name="Basham D."/>
            <person name="Brown D."/>
            <person name="Chillingworth T."/>
            <person name="Connor R."/>
            <person name="Davies R.M."/>
            <person name="Devlin K."/>
            <person name="Duthoy S."/>
            <person name="Feltwell T."/>
            <person name="Fraser A."/>
            <person name="Hamlin N."/>
            <person name="Holroyd S."/>
            <person name="Hornsby T."/>
            <person name="Jagels K."/>
            <person name="Lacroix C."/>
            <person name="Maclean J."/>
            <person name="Moule S."/>
            <person name="Murphy L.D."/>
            <person name="Oliver K."/>
            <person name="Quail M.A."/>
            <person name="Rajandream M.A."/>
            <person name="Rutherford K.M."/>
            <person name="Rutter S."/>
            <person name="Seeger K."/>
            <person name="Simon S."/>
            <person name="Simmonds M."/>
            <person name="Skelton J."/>
            <person name="Squares R."/>
            <person name="Squares S."/>
            <person name="Stevens K."/>
            <person name="Taylor K."/>
            <person name="Whitehead S."/>
            <person name="Woodward J.R."/>
            <person name="Barrell B.G."/>
        </authorList>
    </citation>
    <scope>NUCLEOTIDE SEQUENCE [LARGE SCALE GENOMIC DNA]</scope>
    <source>
        <strain>TN</strain>
    </source>
</reference>
<evidence type="ECO:0000255" key="1">
    <source>
        <dbReference type="HAMAP-Rule" id="MF_00456"/>
    </source>
</evidence>
<protein>
    <recommendedName>
        <fullName evidence="1">Glutamate 5-kinase</fullName>
        <ecNumber evidence="1">2.7.2.11</ecNumber>
    </recommendedName>
    <alternativeName>
        <fullName evidence="1">Gamma-glutamyl kinase</fullName>
        <shortName evidence="1">GK</shortName>
    </alternativeName>
</protein>
<accession>Q9CBZ5</accession>
<organism>
    <name type="scientific">Mycobacterium leprae (strain TN)</name>
    <dbReference type="NCBI Taxonomy" id="272631"/>
    <lineage>
        <taxon>Bacteria</taxon>
        <taxon>Bacillati</taxon>
        <taxon>Actinomycetota</taxon>
        <taxon>Actinomycetes</taxon>
        <taxon>Mycobacteriales</taxon>
        <taxon>Mycobacteriaceae</taxon>
        <taxon>Mycobacterium</taxon>
    </lineage>
</organism>
<feature type="chain" id="PRO_0000109694" description="Glutamate 5-kinase">
    <location>
        <begin position="1"/>
        <end position="367"/>
    </location>
</feature>
<feature type="domain" description="PUA" evidence="1">
    <location>
        <begin position="279"/>
        <end position="357"/>
    </location>
</feature>
<feature type="binding site" evidence="1">
    <location>
        <position position="17"/>
    </location>
    <ligand>
        <name>ATP</name>
        <dbReference type="ChEBI" id="CHEBI:30616"/>
    </ligand>
</feature>
<feature type="binding site" evidence="1">
    <location>
        <position position="57"/>
    </location>
    <ligand>
        <name>substrate</name>
    </ligand>
</feature>
<feature type="binding site" evidence="1">
    <location>
        <position position="144"/>
    </location>
    <ligand>
        <name>substrate</name>
    </ligand>
</feature>
<feature type="binding site" evidence="1">
    <location>
        <position position="156"/>
    </location>
    <ligand>
        <name>substrate</name>
    </ligand>
</feature>
<feature type="binding site" evidence="1">
    <location>
        <begin position="176"/>
        <end position="177"/>
    </location>
    <ligand>
        <name>ATP</name>
        <dbReference type="ChEBI" id="CHEBI:30616"/>
    </ligand>
</feature>
<feature type="binding site" evidence="1">
    <location>
        <begin position="217"/>
        <end position="223"/>
    </location>
    <ligand>
        <name>ATP</name>
        <dbReference type="ChEBI" id="CHEBI:30616"/>
    </ligand>
</feature>
<gene>
    <name evidence="1" type="primary">proB</name>
    <name type="ordered locus">ML1464</name>
</gene>
<proteinExistence type="inferred from homology"/>